<reference key="1">
    <citation type="journal article" date="2008" name="J. Bacteriol.">
        <title>The complete genome sequence of Thermococcus onnurineus NA1 reveals a mixed heterotrophic and carboxydotrophic metabolism.</title>
        <authorList>
            <person name="Lee H.S."/>
            <person name="Kang S.G."/>
            <person name="Bae S.S."/>
            <person name="Lim J.K."/>
            <person name="Cho Y."/>
            <person name="Kim Y.J."/>
            <person name="Jeon J.H."/>
            <person name="Cha S.-S."/>
            <person name="Kwon K.K."/>
            <person name="Kim H.-T."/>
            <person name="Park C.-J."/>
            <person name="Lee H.-W."/>
            <person name="Kim S.I."/>
            <person name="Chun J."/>
            <person name="Colwell R.R."/>
            <person name="Kim S.-J."/>
            <person name="Lee J.-H."/>
        </authorList>
    </citation>
    <scope>NUCLEOTIDE SEQUENCE [LARGE SCALE GENOMIC DNA]</scope>
    <source>
        <strain>NA1</strain>
    </source>
</reference>
<keyword id="KW-0342">GTP-binding</keyword>
<keyword id="KW-0378">Hydrolase</keyword>
<keyword id="KW-0396">Initiation factor</keyword>
<keyword id="KW-0460">Magnesium</keyword>
<keyword id="KW-0479">Metal-binding</keyword>
<keyword id="KW-0547">Nucleotide-binding</keyword>
<keyword id="KW-0648">Protein biosynthesis</keyword>
<keyword id="KW-0862">Zinc</keyword>
<feature type="chain" id="PRO_1000095099" description="Translation initiation factor 2 subunit gamma">
    <location>
        <begin position="1"/>
        <end position="410"/>
    </location>
</feature>
<feature type="domain" description="tr-type G" evidence="2">
    <location>
        <begin position="9"/>
        <end position="202"/>
    </location>
</feature>
<feature type="region of interest" description="G1" evidence="1">
    <location>
        <begin position="18"/>
        <end position="25"/>
    </location>
</feature>
<feature type="region of interest" description="G2" evidence="1">
    <location>
        <begin position="46"/>
        <end position="50"/>
    </location>
</feature>
<feature type="region of interest" description="G3" evidence="1">
    <location>
        <begin position="90"/>
        <end position="93"/>
    </location>
</feature>
<feature type="region of interest" description="G4" evidence="1">
    <location>
        <begin position="145"/>
        <end position="148"/>
    </location>
</feature>
<feature type="region of interest" description="G5" evidence="1">
    <location>
        <begin position="180"/>
        <end position="182"/>
    </location>
</feature>
<feature type="binding site" evidence="2">
    <location>
        <begin position="21"/>
        <end position="26"/>
    </location>
    <ligand>
        <name>GTP</name>
        <dbReference type="ChEBI" id="CHEBI:37565"/>
    </ligand>
</feature>
<feature type="binding site" evidence="2">
    <location>
        <position position="21"/>
    </location>
    <ligand>
        <name>Mg(2+)</name>
        <dbReference type="ChEBI" id="CHEBI:18420"/>
        <label>2</label>
    </ligand>
</feature>
<feature type="binding site" evidence="2">
    <location>
        <position position="25"/>
    </location>
    <ligand>
        <name>Mg(2+)</name>
        <dbReference type="ChEBI" id="CHEBI:18420"/>
        <label>1</label>
    </ligand>
</feature>
<feature type="binding site" evidence="2">
    <location>
        <position position="46"/>
    </location>
    <ligand>
        <name>Mg(2+)</name>
        <dbReference type="ChEBI" id="CHEBI:18420"/>
        <label>2</label>
    </ligand>
</feature>
<feature type="binding site" evidence="2">
    <location>
        <position position="48"/>
    </location>
    <ligand>
        <name>Mg(2+)</name>
        <dbReference type="ChEBI" id="CHEBI:18420"/>
        <label>1</label>
    </ligand>
</feature>
<feature type="binding site" evidence="2">
    <location>
        <position position="61"/>
    </location>
    <ligand>
        <name>Zn(2+)</name>
        <dbReference type="ChEBI" id="CHEBI:29105"/>
    </ligand>
</feature>
<feature type="binding site" evidence="2">
    <location>
        <position position="64"/>
    </location>
    <ligand>
        <name>Zn(2+)</name>
        <dbReference type="ChEBI" id="CHEBI:29105"/>
    </ligand>
</feature>
<feature type="binding site" evidence="2">
    <location>
        <position position="73"/>
    </location>
    <ligand>
        <name>Zn(2+)</name>
        <dbReference type="ChEBI" id="CHEBI:29105"/>
    </ligand>
</feature>
<feature type="binding site" evidence="2">
    <location>
        <position position="76"/>
    </location>
    <ligand>
        <name>Zn(2+)</name>
        <dbReference type="ChEBI" id="CHEBI:29105"/>
    </ligand>
</feature>
<feature type="binding site" evidence="2">
    <location>
        <begin position="145"/>
        <end position="148"/>
    </location>
    <ligand>
        <name>GTP</name>
        <dbReference type="ChEBI" id="CHEBI:37565"/>
    </ligand>
</feature>
<feature type="binding site" evidence="2">
    <location>
        <begin position="180"/>
        <end position="182"/>
    </location>
    <ligand>
        <name>GTP</name>
        <dbReference type="ChEBI" id="CHEBI:37565"/>
    </ligand>
</feature>
<organism>
    <name type="scientific">Thermococcus onnurineus (strain NA1)</name>
    <dbReference type="NCBI Taxonomy" id="523850"/>
    <lineage>
        <taxon>Archaea</taxon>
        <taxon>Methanobacteriati</taxon>
        <taxon>Methanobacteriota</taxon>
        <taxon>Thermococci</taxon>
        <taxon>Thermococcales</taxon>
        <taxon>Thermococcaceae</taxon>
        <taxon>Thermococcus</taxon>
    </lineage>
</organism>
<comment type="function">
    <text evidence="2">eIF-2 functions in the early steps of protein synthesis by forming a ternary complex with GTP and initiator tRNA.</text>
</comment>
<comment type="catalytic activity">
    <reaction evidence="2">
        <text>GTP + H2O = GDP + phosphate + H(+)</text>
        <dbReference type="Rhea" id="RHEA:19669"/>
        <dbReference type="ChEBI" id="CHEBI:15377"/>
        <dbReference type="ChEBI" id="CHEBI:15378"/>
        <dbReference type="ChEBI" id="CHEBI:37565"/>
        <dbReference type="ChEBI" id="CHEBI:43474"/>
        <dbReference type="ChEBI" id="CHEBI:58189"/>
        <dbReference type="EC" id="3.6.5.3"/>
    </reaction>
</comment>
<comment type="cofactor">
    <cofactor evidence="2">
        <name>Mg(2+)</name>
        <dbReference type="ChEBI" id="CHEBI:18420"/>
    </cofactor>
</comment>
<comment type="subunit">
    <text evidence="2">Heterotrimer composed of an alpha, a beta and a gamma chain.</text>
</comment>
<comment type="similarity">
    <text evidence="2">Belongs to the TRAFAC class translation factor GTPase superfamily. Classic translation factor GTPase family. EIF2G subfamily.</text>
</comment>
<proteinExistence type="inferred from homology"/>
<accession>B6YW69</accession>
<gene>
    <name evidence="2" type="primary">eif2g</name>
    <name type="ordered locus">TON_1944</name>
</gene>
<protein>
    <recommendedName>
        <fullName evidence="2">Translation initiation factor 2 subunit gamma</fullName>
        <ecNumber evidence="2">3.6.5.3</ecNumber>
    </recommendedName>
    <alternativeName>
        <fullName evidence="2">aIF2-gamma</fullName>
    </alternativeName>
    <alternativeName>
        <fullName evidence="2">eIF-2-gamma</fullName>
    </alternativeName>
</protein>
<dbReference type="EC" id="3.6.5.3" evidence="2"/>
<dbReference type="EMBL" id="CP000855">
    <property type="protein sequence ID" value="ACJ17435.1"/>
    <property type="molecule type" value="Genomic_DNA"/>
</dbReference>
<dbReference type="RefSeq" id="WP_012572906.1">
    <property type="nucleotide sequence ID" value="NC_011529.1"/>
</dbReference>
<dbReference type="SMR" id="B6YW69"/>
<dbReference type="STRING" id="523850.TON_1944"/>
<dbReference type="GeneID" id="7017618"/>
<dbReference type="KEGG" id="ton:TON_1944"/>
<dbReference type="PATRIC" id="fig|523850.10.peg.1959"/>
<dbReference type="eggNOG" id="arCOG01563">
    <property type="taxonomic scope" value="Archaea"/>
</dbReference>
<dbReference type="HOGENOM" id="CLU_027154_0_1_2"/>
<dbReference type="OrthoDB" id="7798at2157"/>
<dbReference type="Proteomes" id="UP000002727">
    <property type="component" value="Chromosome"/>
</dbReference>
<dbReference type="GO" id="GO:0005829">
    <property type="term" value="C:cytosol"/>
    <property type="evidence" value="ECO:0007669"/>
    <property type="project" value="TreeGrafter"/>
</dbReference>
<dbReference type="GO" id="GO:0005525">
    <property type="term" value="F:GTP binding"/>
    <property type="evidence" value="ECO:0007669"/>
    <property type="project" value="UniProtKB-UniRule"/>
</dbReference>
<dbReference type="GO" id="GO:0003924">
    <property type="term" value="F:GTPase activity"/>
    <property type="evidence" value="ECO:0007669"/>
    <property type="project" value="InterPro"/>
</dbReference>
<dbReference type="GO" id="GO:0046872">
    <property type="term" value="F:metal ion binding"/>
    <property type="evidence" value="ECO:0007669"/>
    <property type="project" value="UniProtKB-KW"/>
</dbReference>
<dbReference type="GO" id="GO:0003746">
    <property type="term" value="F:translation elongation factor activity"/>
    <property type="evidence" value="ECO:0007669"/>
    <property type="project" value="UniProtKB-UniRule"/>
</dbReference>
<dbReference type="GO" id="GO:0003743">
    <property type="term" value="F:translation initiation factor activity"/>
    <property type="evidence" value="ECO:0007669"/>
    <property type="project" value="UniProtKB-KW"/>
</dbReference>
<dbReference type="GO" id="GO:0000049">
    <property type="term" value="F:tRNA binding"/>
    <property type="evidence" value="ECO:0007669"/>
    <property type="project" value="InterPro"/>
</dbReference>
<dbReference type="GO" id="GO:0001731">
    <property type="term" value="P:formation of translation preinitiation complex"/>
    <property type="evidence" value="ECO:0007669"/>
    <property type="project" value="TreeGrafter"/>
</dbReference>
<dbReference type="CDD" id="cd01888">
    <property type="entry name" value="eIF2_gamma"/>
    <property type="match status" value="1"/>
</dbReference>
<dbReference type="CDD" id="cd03688">
    <property type="entry name" value="eIF2_gamma_II"/>
    <property type="match status" value="1"/>
</dbReference>
<dbReference type="CDD" id="cd15490">
    <property type="entry name" value="eIF2_gamma_III"/>
    <property type="match status" value="1"/>
</dbReference>
<dbReference type="FunFam" id="2.40.30.10:FF:000009">
    <property type="entry name" value="Eukaryotic translation initiation factor 2 subunit gamma"/>
    <property type="match status" value="1"/>
</dbReference>
<dbReference type="FunFam" id="2.40.30.10:FF:000075">
    <property type="entry name" value="Translation initiation factor 2 subunit gamma"/>
    <property type="match status" value="1"/>
</dbReference>
<dbReference type="Gene3D" id="3.40.50.300">
    <property type="entry name" value="P-loop containing nucleotide triphosphate hydrolases"/>
    <property type="match status" value="1"/>
</dbReference>
<dbReference type="Gene3D" id="2.40.30.10">
    <property type="entry name" value="Translation factors"/>
    <property type="match status" value="2"/>
</dbReference>
<dbReference type="HAMAP" id="MF_00119">
    <property type="entry name" value="eIF_2_gamma"/>
    <property type="match status" value="1"/>
</dbReference>
<dbReference type="InterPro" id="IPR004161">
    <property type="entry name" value="EFTu-like_2"/>
</dbReference>
<dbReference type="InterPro" id="IPR050543">
    <property type="entry name" value="eIF2G"/>
</dbReference>
<dbReference type="InterPro" id="IPR015256">
    <property type="entry name" value="eIF2g_C"/>
</dbReference>
<dbReference type="InterPro" id="IPR044127">
    <property type="entry name" value="eIF2g_dom_2"/>
</dbReference>
<dbReference type="InterPro" id="IPR044128">
    <property type="entry name" value="eIF2g_GTP-bd"/>
</dbReference>
<dbReference type="InterPro" id="IPR027417">
    <property type="entry name" value="P-loop_NTPase"/>
</dbReference>
<dbReference type="InterPro" id="IPR005225">
    <property type="entry name" value="Small_GTP-bd"/>
</dbReference>
<dbReference type="InterPro" id="IPR000795">
    <property type="entry name" value="T_Tr_GTP-bd_dom"/>
</dbReference>
<dbReference type="InterPro" id="IPR022424">
    <property type="entry name" value="TIF2_gsu"/>
</dbReference>
<dbReference type="InterPro" id="IPR009000">
    <property type="entry name" value="Transl_B-barrel_sf"/>
</dbReference>
<dbReference type="InterPro" id="IPR009001">
    <property type="entry name" value="Transl_elong_EF1A/Init_IF2_C"/>
</dbReference>
<dbReference type="NCBIfam" id="TIGR03680">
    <property type="entry name" value="eif2g_arch"/>
    <property type="match status" value="1"/>
</dbReference>
<dbReference type="NCBIfam" id="NF003077">
    <property type="entry name" value="PRK04000.1"/>
    <property type="match status" value="1"/>
</dbReference>
<dbReference type="NCBIfam" id="TIGR00231">
    <property type="entry name" value="small_GTP"/>
    <property type="match status" value="1"/>
</dbReference>
<dbReference type="PANTHER" id="PTHR42854">
    <property type="entry name" value="EUKARYOTIC TRANSLATION INITIATION FACTOR 2 SUBUNIT 3 FAMILY MEMBER"/>
    <property type="match status" value="1"/>
</dbReference>
<dbReference type="PANTHER" id="PTHR42854:SF3">
    <property type="entry name" value="EUKARYOTIC TRANSLATION INITIATION FACTOR 2 SUBUNIT 3-RELATED"/>
    <property type="match status" value="1"/>
</dbReference>
<dbReference type="Pfam" id="PF09173">
    <property type="entry name" value="eIF2_C"/>
    <property type="match status" value="1"/>
</dbReference>
<dbReference type="Pfam" id="PF00009">
    <property type="entry name" value="GTP_EFTU"/>
    <property type="match status" value="1"/>
</dbReference>
<dbReference type="Pfam" id="PF03144">
    <property type="entry name" value="GTP_EFTU_D2"/>
    <property type="match status" value="1"/>
</dbReference>
<dbReference type="PRINTS" id="PR00315">
    <property type="entry name" value="ELONGATNFCT"/>
</dbReference>
<dbReference type="SUPFAM" id="SSF50465">
    <property type="entry name" value="EF-Tu/eEF-1alpha/eIF2-gamma C-terminal domain"/>
    <property type="match status" value="1"/>
</dbReference>
<dbReference type="SUPFAM" id="SSF52540">
    <property type="entry name" value="P-loop containing nucleoside triphosphate hydrolases"/>
    <property type="match status" value="1"/>
</dbReference>
<dbReference type="SUPFAM" id="SSF50447">
    <property type="entry name" value="Translation proteins"/>
    <property type="match status" value="1"/>
</dbReference>
<dbReference type="PROSITE" id="PS51722">
    <property type="entry name" value="G_TR_2"/>
    <property type="match status" value="1"/>
</dbReference>
<name>IF2G_THEON</name>
<sequence>MAKKKEFRQAEVNIGMVGHVDHGKTTLTKALTGIWTDTHSEELRRGITIKIGFADAEIRKCPSCGRYSTSPICPYCGHETEFERRVSFIDAPGHEALMTTMLAGASLMDGAVLVIAANEGVMPQTREHLMALQIVGNKNIVIALNKIELVDREKVIERYQEIKEFVKGTVAENAPIIPISALHGANVDVLLAAIEEFIPTPEHDPNKPPKMLVLRSFDVNKPGTKPEKLVGGVIGGSIVQGKLKVGDEIEIRPGVPYEEHGRIKYEPITTEIVSLQAGGRFVEEAYPGGLVGVGTKLDPYLTKGDLMAGNVVGKPGQLPPVWDELRLEVHLLERVVGTEEELKVEPIKRREVLLLNVGTARTMGLVTGLGKDEIELKLQIPICAEVGDRVAISRQVGSRWRLIGYGFIRE</sequence>
<evidence type="ECO:0000250" key="1">
    <source>
        <dbReference type="UniProtKB" id="Q980A5"/>
    </source>
</evidence>
<evidence type="ECO:0000255" key="2">
    <source>
        <dbReference type="HAMAP-Rule" id="MF_00119"/>
    </source>
</evidence>